<feature type="initiator methionine" description="Removed" evidence="1">
    <location>
        <position position="1"/>
    </location>
</feature>
<feature type="chain" id="PRO_0000411582" description="Probable tautomerase SPs0996">
    <location>
        <begin position="2"/>
        <end position="61"/>
    </location>
</feature>
<feature type="active site" description="Proton acceptor; via imino nitrogen" evidence="1">
    <location>
        <position position="2"/>
    </location>
</feature>
<protein>
    <recommendedName>
        <fullName>Probable tautomerase SPs0996</fullName>
        <ecNumber>5.3.2.-</ecNumber>
    </recommendedName>
</protein>
<evidence type="ECO:0000250" key="1"/>
<evidence type="ECO:0000305" key="2"/>
<accession>P0DF85</accession>
<accession>P67533</accession>
<accession>Q99ZP7</accession>
<keyword id="KW-0413">Isomerase</keyword>
<proteinExistence type="inferred from homology"/>
<gene>
    <name type="ordered locus">SPs0996</name>
</gene>
<comment type="similarity">
    <text evidence="2">Belongs to the 4-oxalocrotonate tautomerase family.</text>
</comment>
<sequence>MPFVTIDLFEGRSQEQKNQLAREVTEVVSRIAKAPKENIHVFINDMPEGTYYPQGEMKQKS</sequence>
<name>Y797_STRPQ</name>
<reference key="1">
    <citation type="journal article" date="2003" name="Genome Res.">
        <title>Genome sequence of an M3 strain of Streptococcus pyogenes reveals a large-scale genomic rearrangement in invasive strains and new insights into phage evolution.</title>
        <authorList>
            <person name="Nakagawa I."/>
            <person name="Kurokawa K."/>
            <person name="Yamashita A."/>
            <person name="Nakata M."/>
            <person name="Tomiyasu Y."/>
            <person name="Okahashi N."/>
            <person name="Kawabata S."/>
            <person name="Yamazaki K."/>
            <person name="Shiba T."/>
            <person name="Yasunaga T."/>
            <person name="Hayashi H."/>
            <person name="Hattori M."/>
            <person name="Hamada S."/>
        </authorList>
    </citation>
    <scope>NUCLEOTIDE SEQUENCE [LARGE SCALE GENOMIC DNA]</scope>
    <source>
        <strain>SSI-1</strain>
    </source>
</reference>
<organism>
    <name type="scientific">Streptococcus pyogenes serotype M3 (strain SSI-1)</name>
    <dbReference type="NCBI Taxonomy" id="193567"/>
    <lineage>
        <taxon>Bacteria</taxon>
        <taxon>Bacillati</taxon>
        <taxon>Bacillota</taxon>
        <taxon>Bacilli</taxon>
        <taxon>Lactobacillales</taxon>
        <taxon>Streptococcaceae</taxon>
        <taxon>Streptococcus</taxon>
    </lineage>
</organism>
<dbReference type="EC" id="5.3.2.-"/>
<dbReference type="EMBL" id="BA000034">
    <property type="protein sequence ID" value="BAC64091.1"/>
    <property type="molecule type" value="Genomic_DNA"/>
</dbReference>
<dbReference type="RefSeq" id="WP_002984671.1">
    <property type="nucleotide sequence ID" value="NC_004606.1"/>
</dbReference>
<dbReference type="SMR" id="P0DF85"/>
<dbReference type="KEGG" id="sps:SPs0996"/>
<dbReference type="HOGENOM" id="CLU_148073_5_1_9"/>
<dbReference type="GO" id="GO:0016853">
    <property type="term" value="F:isomerase activity"/>
    <property type="evidence" value="ECO:0007669"/>
    <property type="project" value="UniProtKB-KW"/>
</dbReference>
<dbReference type="Gene3D" id="3.30.429.10">
    <property type="entry name" value="Macrophage Migration Inhibitory Factor"/>
    <property type="match status" value="1"/>
</dbReference>
<dbReference type="InterPro" id="IPR004370">
    <property type="entry name" value="4-OT-like_dom"/>
</dbReference>
<dbReference type="InterPro" id="IPR014347">
    <property type="entry name" value="Tautomerase/MIF_sf"/>
</dbReference>
<dbReference type="NCBIfam" id="NF002571">
    <property type="entry name" value="PRK02220.1"/>
    <property type="match status" value="1"/>
</dbReference>
<dbReference type="NCBIfam" id="NF002622">
    <property type="entry name" value="PRK02289.1"/>
    <property type="match status" value="1"/>
</dbReference>
<dbReference type="PANTHER" id="PTHR35530:SF1">
    <property type="entry name" value="2-HYDROXYMUCONATE TAUTOMERASE"/>
    <property type="match status" value="1"/>
</dbReference>
<dbReference type="PANTHER" id="PTHR35530">
    <property type="entry name" value="TAUTOMERASE-RELATED"/>
    <property type="match status" value="1"/>
</dbReference>
<dbReference type="Pfam" id="PF01361">
    <property type="entry name" value="Tautomerase"/>
    <property type="match status" value="1"/>
</dbReference>
<dbReference type="SUPFAM" id="SSF55331">
    <property type="entry name" value="Tautomerase/MIF"/>
    <property type="match status" value="1"/>
</dbReference>